<sequence length="306" mass="32893">MTDKIAVLLGGTSAEREVSLNSGAAVLAGLREGGIDAYPVDPKEVDVTQLKSMGFQKVFIALHGRGGEDGTLQGMLELMGLPYTGSGVMASALSMDKLRSKLLWQGAGLPVAPWVALTRAEFEKGLNDKQLAEISSLGLPVIVKPSREGSSVGMSKVVAENALQDALRLAFQHDEEVLIEKWLSGPEFTVAILGEEILPSIRIQPAGTFYDYEAKYLSDETQYFCPAGLEALQEANLQALVLKAWTTLGCKGWGRIDVMLDSDGQFYLLEANTSPGMTSHSLVPMAARQAGMSFSQLVVRILELAD</sequence>
<dbReference type="EC" id="6.3.2.4" evidence="2"/>
<dbReference type="EMBL" id="AE014075">
    <property type="protein sequence ID" value="AAN78608.1"/>
    <property type="molecule type" value="Genomic_DNA"/>
</dbReference>
<dbReference type="RefSeq" id="WP_000130041.1">
    <property type="nucleotide sequence ID" value="NZ_CP051263.1"/>
</dbReference>
<dbReference type="SMR" id="Q8FL63"/>
<dbReference type="STRING" id="199310.c0110"/>
<dbReference type="KEGG" id="ecc:c0110"/>
<dbReference type="eggNOG" id="COG1181">
    <property type="taxonomic scope" value="Bacteria"/>
</dbReference>
<dbReference type="HOGENOM" id="CLU_039268_1_2_6"/>
<dbReference type="BioCyc" id="ECOL199310:C0110-MONOMER"/>
<dbReference type="UniPathway" id="UPA00219"/>
<dbReference type="Proteomes" id="UP000001410">
    <property type="component" value="Chromosome"/>
</dbReference>
<dbReference type="GO" id="GO:0005829">
    <property type="term" value="C:cytosol"/>
    <property type="evidence" value="ECO:0007669"/>
    <property type="project" value="TreeGrafter"/>
</dbReference>
<dbReference type="GO" id="GO:0005524">
    <property type="term" value="F:ATP binding"/>
    <property type="evidence" value="ECO:0007669"/>
    <property type="project" value="UniProtKB-KW"/>
</dbReference>
<dbReference type="GO" id="GO:0008716">
    <property type="term" value="F:D-alanine-D-alanine ligase activity"/>
    <property type="evidence" value="ECO:0007669"/>
    <property type="project" value="UniProtKB-UniRule"/>
</dbReference>
<dbReference type="GO" id="GO:0046872">
    <property type="term" value="F:metal ion binding"/>
    <property type="evidence" value="ECO:0007669"/>
    <property type="project" value="UniProtKB-KW"/>
</dbReference>
<dbReference type="GO" id="GO:0071555">
    <property type="term" value="P:cell wall organization"/>
    <property type="evidence" value="ECO:0007669"/>
    <property type="project" value="UniProtKB-KW"/>
</dbReference>
<dbReference type="GO" id="GO:0009252">
    <property type="term" value="P:peptidoglycan biosynthetic process"/>
    <property type="evidence" value="ECO:0007669"/>
    <property type="project" value="UniProtKB-UniRule"/>
</dbReference>
<dbReference type="GO" id="GO:0008360">
    <property type="term" value="P:regulation of cell shape"/>
    <property type="evidence" value="ECO:0007669"/>
    <property type="project" value="UniProtKB-KW"/>
</dbReference>
<dbReference type="FunFam" id="3.30.1490.20:FF:000007">
    <property type="entry name" value="D-alanine--D-alanine ligase"/>
    <property type="match status" value="1"/>
</dbReference>
<dbReference type="FunFam" id="3.30.470.20:FF:000008">
    <property type="entry name" value="D-alanine--D-alanine ligase"/>
    <property type="match status" value="1"/>
</dbReference>
<dbReference type="FunFam" id="3.40.50.20:FF:000013">
    <property type="entry name" value="D-alanine--D-alanine ligase"/>
    <property type="match status" value="1"/>
</dbReference>
<dbReference type="Gene3D" id="3.40.50.20">
    <property type="match status" value="1"/>
</dbReference>
<dbReference type="Gene3D" id="3.30.1490.20">
    <property type="entry name" value="ATP-grasp fold, A domain"/>
    <property type="match status" value="1"/>
</dbReference>
<dbReference type="Gene3D" id="3.30.470.20">
    <property type="entry name" value="ATP-grasp fold, B domain"/>
    <property type="match status" value="1"/>
</dbReference>
<dbReference type="HAMAP" id="MF_00047">
    <property type="entry name" value="Dala_Dala_lig"/>
    <property type="match status" value="1"/>
</dbReference>
<dbReference type="InterPro" id="IPR011761">
    <property type="entry name" value="ATP-grasp"/>
</dbReference>
<dbReference type="InterPro" id="IPR013815">
    <property type="entry name" value="ATP_grasp_subdomain_1"/>
</dbReference>
<dbReference type="InterPro" id="IPR000291">
    <property type="entry name" value="D-Ala_lig_Van_CS"/>
</dbReference>
<dbReference type="InterPro" id="IPR005905">
    <property type="entry name" value="D_ala_D_ala"/>
</dbReference>
<dbReference type="InterPro" id="IPR011095">
    <property type="entry name" value="Dala_Dala_lig_C"/>
</dbReference>
<dbReference type="InterPro" id="IPR011127">
    <property type="entry name" value="Dala_Dala_lig_N"/>
</dbReference>
<dbReference type="InterPro" id="IPR016185">
    <property type="entry name" value="PreATP-grasp_dom_sf"/>
</dbReference>
<dbReference type="NCBIfam" id="TIGR01205">
    <property type="entry name" value="D_ala_D_alaTIGR"/>
    <property type="match status" value="1"/>
</dbReference>
<dbReference type="NCBIfam" id="NF002378">
    <property type="entry name" value="PRK01372.1"/>
    <property type="match status" value="1"/>
</dbReference>
<dbReference type="PANTHER" id="PTHR23132">
    <property type="entry name" value="D-ALANINE--D-ALANINE LIGASE"/>
    <property type="match status" value="1"/>
</dbReference>
<dbReference type="PANTHER" id="PTHR23132:SF23">
    <property type="entry name" value="D-ALANINE--D-ALANINE LIGASE B"/>
    <property type="match status" value="1"/>
</dbReference>
<dbReference type="Pfam" id="PF07478">
    <property type="entry name" value="Dala_Dala_lig_C"/>
    <property type="match status" value="1"/>
</dbReference>
<dbReference type="Pfam" id="PF01820">
    <property type="entry name" value="Dala_Dala_lig_N"/>
    <property type="match status" value="1"/>
</dbReference>
<dbReference type="PIRSF" id="PIRSF039102">
    <property type="entry name" value="Ddl/VanB"/>
    <property type="match status" value="1"/>
</dbReference>
<dbReference type="SUPFAM" id="SSF56059">
    <property type="entry name" value="Glutathione synthetase ATP-binding domain-like"/>
    <property type="match status" value="1"/>
</dbReference>
<dbReference type="SUPFAM" id="SSF52440">
    <property type="entry name" value="PreATP-grasp domain"/>
    <property type="match status" value="1"/>
</dbReference>
<dbReference type="PROSITE" id="PS50975">
    <property type="entry name" value="ATP_GRASP"/>
    <property type="match status" value="1"/>
</dbReference>
<dbReference type="PROSITE" id="PS00843">
    <property type="entry name" value="DALA_DALA_LIGASE_1"/>
    <property type="match status" value="1"/>
</dbReference>
<dbReference type="PROSITE" id="PS00844">
    <property type="entry name" value="DALA_DALA_LIGASE_2"/>
    <property type="match status" value="1"/>
</dbReference>
<protein>
    <recommendedName>
        <fullName evidence="2">D-alanine--D-alanine ligase B</fullName>
        <ecNumber evidence="2">6.3.2.4</ecNumber>
    </recommendedName>
    <alternativeName>
        <fullName evidence="2">D-Ala-D-Ala ligase B</fullName>
    </alternativeName>
    <alternativeName>
        <fullName evidence="2">D-alanylalanine synthetase B</fullName>
    </alternativeName>
</protein>
<gene>
    <name evidence="2" type="primary">ddlB</name>
    <name type="ordered locus">c0110</name>
</gene>
<comment type="function">
    <text evidence="2">Cell wall formation.</text>
</comment>
<comment type="catalytic activity">
    <reaction evidence="2">
        <text>2 D-alanine + ATP = D-alanyl-D-alanine + ADP + phosphate + H(+)</text>
        <dbReference type="Rhea" id="RHEA:11224"/>
        <dbReference type="ChEBI" id="CHEBI:15378"/>
        <dbReference type="ChEBI" id="CHEBI:30616"/>
        <dbReference type="ChEBI" id="CHEBI:43474"/>
        <dbReference type="ChEBI" id="CHEBI:57416"/>
        <dbReference type="ChEBI" id="CHEBI:57822"/>
        <dbReference type="ChEBI" id="CHEBI:456216"/>
        <dbReference type="EC" id="6.3.2.4"/>
    </reaction>
</comment>
<comment type="cofactor">
    <cofactor evidence="1">
        <name>Mg(2+)</name>
        <dbReference type="ChEBI" id="CHEBI:18420"/>
    </cofactor>
    <cofactor evidence="1">
        <name>Mn(2+)</name>
        <dbReference type="ChEBI" id="CHEBI:29035"/>
    </cofactor>
    <text evidence="1">Binds 2 magnesium or manganese ions per subunit.</text>
</comment>
<comment type="pathway">
    <text evidence="2">Cell wall biogenesis; peptidoglycan biosynthesis.</text>
</comment>
<comment type="subunit">
    <text evidence="1">Monomer.</text>
</comment>
<comment type="subcellular location">
    <subcellularLocation>
        <location evidence="2">Cytoplasm</location>
    </subcellularLocation>
</comment>
<comment type="similarity">
    <text evidence="2">Belongs to the D-alanine--D-alanine ligase family.</text>
</comment>
<evidence type="ECO:0000250" key="1"/>
<evidence type="ECO:0000255" key="2">
    <source>
        <dbReference type="HAMAP-Rule" id="MF_00047"/>
    </source>
</evidence>
<organism>
    <name type="scientific">Escherichia coli O6:H1 (strain CFT073 / ATCC 700928 / UPEC)</name>
    <dbReference type="NCBI Taxonomy" id="199310"/>
    <lineage>
        <taxon>Bacteria</taxon>
        <taxon>Pseudomonadati</taxon>
        <taxon>Pseudomonadota</taxon>
        <taxon>Gammaproteobacteria</taxon>
        <taxon>Enterobacterales</taxon>
        <taxon>Enterobacteriaceae</taxon>
        <taxon>Escherichia</taxon>
    </lineage>
</organism>
<keyword id="KW-0067">ATP-binding</keyword>
<keyword id="KW-0133">Cell shape</keyword>
<keyword id="KW-0961">Cell wall biogenesis/degradation</keyword>
<keyword id="KW-0963">Cytoplasm</keyword>
<keyword id="KW-0436">Ligase</keyword>
<keyword id="KW-0460">Magnesium</keyword>
<keyword id="KW-0464">Manganese</keyword>
<keyword id="KW-0479">Metal-binding</keyword>
<keyword id="KW-0547">Nucleotide-binding</keyword>
<keyword id="KW-0573">Peptidoglycan synthesis</keyword>
<keyword id="KW-1185">Reference proteome</keyword>
<feature type="initiator methionine" description="Removed" evidence="1">
    <location>
        <position position="1"/>
    </location>
</feature>
<feature type="chain" id="PRO_0000177819" description="D-alanine--D-alanine ligase B">
    <location>
        <begin position="2"/>
        <end position="306"/>
    </location>
</feature>
<feature type="domain" description="ATP-grasp" evidence="2">
    <location>
        <begin position="101"/>
        <end position="303"/>
    </location>
</feature>
<feature type="active site" evidence="1">
    <location>
        <position position="15"/>
    </location>
</feature>
<feature type="active site" evidence="1">
    <location>
        <position position="150"/>
    </location>
</feature>
<feature type="active site" evidence="1">
    <location>
        <position position="281"/>
    </location>
</feature>
<feature type="binding site" evidence="2">
    <location>
        <begin position="134"/>
        <end position="189"/>
    </location>
    <ligand>
        <name>ATP</name>
        <dbReference type="ChEBI" id="CHEBI:30616"/>
    </ligand>
</feature>
<feature type="binding site" evidence="2">
    <location>
        <position position="257"/>
    </location>
    <ligand>
        <name>Mg(2+)</name>
        <dbReference type="ChEBI" id="CHEBI:18420"/>
        <label>1</label>
    </ligand>
</feature>
<feature type="binding site" evidence="2">
    <location>
        <position position="270"/>
    </location>
    <ligand>
        <name>Mg(2+)</name>
        <dbReference type="ChEBI" id="CHEBI:18420"/>
        <label>1</label>
    </ligand>
</feature>
<feature type="binding site" evidence="2">
    <location>
        <position position="270"/>
    </location>
    <ligand>
        <name>Mg(2+)</name>
        <dbReference type="ChEBI" id="CHEBI:18420"/>
        <label>2</label>
    </ligand>
</feature>
<feature type="binding site" evidence="2">
    <location>
        <position position="272"/>
    </location>
    <ligand>
        <name>Mg(2+)</name>
        <dbReference type="ChEBI" id="CHEBI:18420"/>
        <label>2</label>
    </ligand>
</feature>
<reference key="1">
    <citation type="journal article" date="2002" name="Proc. Natl. Acad. Sci. U.S.A.">
        <title>Extensive mosaic structure revealed by the complete genome sequence of uropathogenic Escherichia coli.</title>
        <authorList>
            <person name="Welch R.A."/>
            <person name="Burland V."/>
            <person name="Plunkett G. III"/>
            <person name="Redford P."/>
            <person name="Roesch P."/>
            <person name="Rasko D."/>
            <person name="Buckles E.L."/>
            <person name="Liou S.-R."/>
            <person name="Boutin A."/>
            <person name="Hackett J."/>
            <person name="Stroud D."/>
            <person name="Mayhew G.F."/>
            <person name="Rose D.J."/>
            <person name="Zhou S."/>
            <person name="Schwartz D.C."/>
            <person name="Perna N.T."/>
            <person name="Mobley H.L.T."/>
            <person name="Donnenberg M.S."/>
            <person name="Blattner F.R."/>
        </authorList>
    </citation>
    <scope>NUCLEOTIDE SEQUENCE [LARGE SCALE GENOMIC DNA]</scope>
    <source>
        <strain>CFT073 / ATCC 700928 / UPEC</strain>
    </source>
</reference>
<accession>Q8FL63</accession>
<name>DDLB_ECOL6</name>
<proteinExistence type="inferred from homology"/>